<reference key="1">
    <citation type="submission" date="2006-12" db="EMBL/GenBank/DDBJ databases">
        <title>Complete sequence of Shewanella sp. W3-18-1.</title>
        <authorList>
            <consortium name="US DOE Joint Genome Institute"/>
            <person name="Copeland A."/>
            <person name="Lucas S."/>
            <person name="Lapidus A."/>
            <person name="Barry K."/>
            <person name="Detter J.C."/>
            <person name="Glavina del Rio T."/>
            <person name="Hammon N."/>
            <person name="Israni S."/>
            <person name="Dalin E."/>
            <person name="Tice H."/>
            <person name="Pitluck S."/>
            <person name="Chain P."/>
            <person name="Malfatti S."/>
            <person name="Shin M."/>
            <person name="Vergez L."/>
            <person name="Schmutz J."/>
            <person name="Larimer F."/>
            <person name="Land M."/>
            <person name="Hauser L."/>
            <person name="Kyrpides N."/>
            <person name="Lykidis A."/>
            <person name="Tiedje J."/>
            <person name="Richardson P."/>
        </authorList>
    </citation>
    <scope>NUCLEOTIDE SEQUENCE [LARGE SCALE GENOMIC DNA]</scope>
    <source>
        <strain>W3-18-1</strain>
    </source>
</reference>
<evidence type="ECO:0000255" key="1">
    <source>
        <dbReference type="HAMAP-Rule" id="MF_01576"/>
    </source>
</evidence>
<gene>
    <name evidence="1" type="primary">folD</name>
    <name type="ordered locus">Sputw3181_2613</name>
</gene>
<accession>A1RL91</accession>
<protein>
    <recommendedName>
        <fullName evidence="1">Bifunctional protein FolD</fullName>
    </recommendedName>
    <domain>
        <recommendedName>
            <fullName evidence="1">Methylenetetrahydrofolate dehydrogenase</fullName>
            <ecNumber evidence="1">1.5.1.5</ecNumber>
        </recommendedName>
    </domain>
    <domain>
        <recommendedName>
            <fullName evidence="1">Methenyltetrahydrofolate cyclohydrolase</fullName>
            <ecNumber evidence="1">3.5.4.9</ecNumber>
        </recommendedName>
    </domain>
</protein>
<feature type="chain" id="PRO_0000305879" description="Bifunctional protein FolD">
    <location>
        <begin position="1"/>
        <end position="284"/>
    </location>
</feature>
<feature type="binding site" evidence="1">
    <location>
        <begin position="166"/>
        <end position="168"/>
    </location>
    <ligand>
        <name>NADP(+)</name>
        <dbReference type="ChEBI" id="CHEBI:58349"/>
    </ligand>
</feature>
<feature type="binding site" evidence="1">
    <location>
        <position position="232"/>
    </location>
    <ligand>
        <name>NADP(+)</name>
        <dbReference type="ChEBI" id="CHEBI:58349"/>
    </ligand>
</feature>
<dbReference type="EC" id="1.5.1.5" evidence="1"/>
<dbReference type="EC" id="3.5.4.9" evidence="1"/>
<dbReference type="EMBL" id="CP000503">
    <property type="protein sequence ID" value="ABM25436.1"/>
    <property type="molecule type" value="Genomic_DNA"/>
</dbReference>
<dbReference type="RefSeq" id="WP_011789893.1">
    <property type="nucleotide sequence ID" value="NC_008750.1"/>
</dbReference>
<dbReference type="SMR" id="A1RL91"/>
<dbReference type="KEGG" id="shw:Sputw3181_2613"/>
<dbReference type="HOGENOM" id="CLU_034045_2_1_6"/>
<dbReference type="UniPathway" id="UPA00193"/>
<dbReference type="Proteomes" id="UP000002597">
    <property type="component" value="Chromosome"/>
</dbReference>
<dbReference type="GO" id="GO:0005829">
    <property type="term" value="C:cytosol"/>
    <property type="evidence" value="ECO:0007669"/>
    <property type="project" value="TreeGrafter"/>
</dbReference>
<dbReference type="GO" id="GO:0004477">
    <property type="term" value="F:methenyltetrahydrofolate cyclohydrolase activity"/>
    <property type="evidence" value="ECO:0007669"/>
    <property type="project" value="UniProtKB-UniRule"/>
</dbReference>
<dbReference type="GO" id="GO:0004488">
    <property type="term" value="F:methylenetetrahydrofolate dehydrogenase (NADP+) activity"/>
    <property type="evidence" value="ECO:0007669"/>
    <property type="project" value="UniProtKB-UniRule"/>
</dbReference>
<dbReference type="GO" id="GO:0000105">
    <property type="term" value="P:L-histidine biosynthetic process"/>
    <property type="evidence" value="ECO:0007669"/>
    <property type="project" value="UniProtKB-KW"/>
</dbReference>
<dbReference type="GO" id="GO:0009086">
    <property type="term" value="P:methionine biosynthetic process"/>
    <property type="evidence" value="ECO:0007669"/>
    <property type="project" value="UniProtKB-KW"/>
</dbReference>
<dbReference type="GO" id="GO:0006164">
    <property type="term" value="P:purine nucleotide biosynthetic process"/>
    <property type="evidence" value="ECO:0007669"/>
    <property type="project" value="UniProtKB-KW"/>
</dbReference>
<dbReference type="GO" id="GO:0035999">
    <property type="term" value="P:tetrahydrofolate interconversion"/>
    <property type="evidence" value="ECO:0007669"/>
    <property type="project" value="UniProtKB-UniRule"/>
</dbReference>
<dbReference type="CDD" id="cd01080">
    <property type="entry name" value="NAD_bind_m-THF_DH_Cyclohyd"/>
    <property type="match status" value="1"/>
</dbReference>
<dbReference type="FunFam" id="3.40.50.10860:FF:000001">
    <property type="entry name" value="Bifunctional protein FolD"/>
    <property type="match status" value="1"/>
</dbReference>
<dbReference type="FunFam" id="3.40.50.720:FF:000006">
    <property type="entry name" value="Bifunctional protein FolD"/>
    <property type="match status" value="1"/>
</dbReference>
<dbReference type="Gene3D" id="3.40.50.10860">
    <property type="entry name" value="Leucine Dehydrogenase, chain A, domain 1"/>
    <property type="match status" value="1"/>
</dbReference>
<dbReference type="Gene3D" id="3.40.50.720">
    <property type="entry name" value="NAD(P)-binding Rossmann-like Domain"/>
    <property type="match status" value="1"/>
</dbReference>
<dbReference type="HAMAP" id="MF_01576">
    <property type="entry name" value="THF_DHG_CYH"/>
    <property type="match status" value="1"/>
</dbReference>
<dbReference type="InterPro" id="IPR046346">
    <property type="entry name" value="Aminoacid_DH-like_N_sf"/>
</dbReference>
<dbReference type="InterPro" id="IPR036291">
    <property type="entry name" value="NAD(P)-bd_dom_sf"/>
</dbReference>
<dbReference type="InterPro" id="IPR000672">
    <property type="entry name" value="THF_DH/CycHdrlase"/>
</dbReference>
<dbReference type="InterPro" id="IPR020630">
    <property type="entry name" value="THF_DH/CycHdrlase_cat_dom"/>
</dbReference>
<dbReference type="InterPro" id="IPR020867">
    <property type="entry name" value="THF_DH/CycHdrlase_CS"/>
</dbReference>
<dbReference type="InterPro" id="IPR020631">
    <property type="entry name" value="THF_DH/CycHdrlase_NAD-bd_dom"/>
</dbReference>
<dbReference type="NCBIfam" id="NF008058">
    <property type="entry name" value="PRK10792.1"/>
    <property type="match status" value="1"/>
</dbReference>
<dbReference type="NCBIfam" id="NF010783">
    <property type="entry name" value="PRK14186.1"/>
    <property type="match status" value="1"/>
</dbReference>
<dbReference type="PANTHER" id="PTHR48099:SF5">
    <property type="entry name" value="C-1-TETRAHYDROFOLATE SYNTHASE, CYTOPLASMIC"/>
    <property type="match status" value="1"/>
</dbReference>
<dbReference type="PANTHER" id="PTHR48099">
    <property type="entry name" value="C-1-TETRAHYDROFOLATE SYNTHASE, CYTOPLASMIC-RELATED"/>
    <property type="match status" value="1"/>
</dbReference>
<dbReference type="Pfam" id="PF00763">
    <property type="entry name" value="THF_DHG_CYH"/>
    <property type="match status" value="1"/>
</dbReference>
<dbReference type="Pfam" id="PF02882">
    <property type="entry name" value="THF_DHG_CYH_C"/>
    <property type="match status" value="1"/>
</dbReference>
<dbReference type="PRINTS" id="PR00085">
    <property type="entry name" value="THFDHDRGNASE"/>
</dbReference>
<dbReference type="SUPFAM" id="SSF53223">
    <property type="entry name" value="Aminoacid dehydrogenase-like, N-terminal domain"/>
    <property type="match status" value="1"/>
</dbReference>
<dbReference type="SUPFAM" id="SSF51735">
    <property type="entry name" value="NAD(P)-binding Rossmann-fold domains"/>
    <property type="match status" value="1"/>
</dbReference>
<dbReference type="PROSITE" id="PS00766">
    <property type="entry name" value="THF_DHG_CYH_1"/>
    <property type="match status" value="1"/>
</dbReference>
<dbReference type="PROSITE" id="PS00767">
    <property type="entry name" value="THF_DHG_CYH_2"/>
    <property type="match status" value="1"/>
</dbReference>
<organism>
    <name type="scientific">Shewanella sp. (strain W3-18-1)</name>
    <dbReference type="NCBI Taxonomy" id="351745"/>
    <lineage>
        <taxon>Bacteria</taxon>
        <taxon>Pseudomonadati</taxon>
        <taxon>Pseudomonadota</taxon>
        <taxon>Gammaproteobacteria</taxon>
        <taxon>Alteromonadales</taxon>
        <taxon>Shewanellaceae</taxon>
        <taxon>Shewanella</taxon>
    </lineage>
</organism>
<keyword id="KW-0028">Amino-acid biosynthesis</keyword>
<keyword id="KW-0368">Histidine biosynthesis</keyword>
<keyword id="KW-0378">Hydrolase</keyword>
<keyword id="KW-0486">Methionine biosynthesis</keyword>
<keyword id="KW-0511">Multifunctional enzyme</keyword>
<keyword id="KW-0521">NADP</keyword>
<keyword id="KW-0554">One-carbon metabolism</keyword>
<keyword id="KW-0560">Oxidoreductase</keyword>
<keyword id="KW-0658">Purine biosynthesis</keyword>
<comment type="function">
    <text evidence="1">Catalyzes the oxidation of 5,10-methylenetetrahydrofolate to 5,10-methenyltetrahydrofolate and then the hydrolysis of 5,10-methenyltetrahydrofolate to 10-formyltetrahydrofolate.</text>
</comment>
<comment type="catalytic activity">
    <reaction evidence="1">
        <text>(6R)-5,10-methylene-5,6,7,8-tetrahydrofolate + NADP(+) = (6R)-5,10-methenyltetrahydrofolate + NADPH</text>
        <dbReference type="Rhea" id="RHEA:22812"/>
        <dbReference type="ChEBI" id="CHEBI:15636"/>
        <dbReference type="ChEBI" id="CHEBI:57455"/>
        <dbReference type="ChEBI" id="CHEBI:57783"/>
        <dbReference type="ChEBI" id="CHEBI:58349"/>
        <dbReference type="EC" id="1.5.1.5"/>
    </reaction>
</comment>
<comment type="catalytic activity">
    <reaction evidence="1">
        <text>(6R)-5,10-methenyltetrahydrofolate + H2O = (6R)-10-formyltetrahydrofolate + H(+)</text>
        <dbReference type="Rhea" id="RHEA:23700"/>
        <dbReference type="ChEBI" id="CHEBI:15377"/>
        <dbReference type="ChEBI" id="CHEBI:15378"/>
        <dbReference type="ChEBI" id="CHEBI:57455"/>
        <dbReference type="ChEBI" id="CHEBI:195366"/>
        <dbReference type="EC" id="3.5.4.9"/>
    </reaction>
</comment>
<comment type="pathway">
    <text evidence="1">One-carbon metabolism; tetrahydrofolate interconversion.</text>
</comment>
<comment type="subunit">
    <text evidence="1">Homodimer.</text>
</comment>
<comment type="similarity">
    <text evidence="1">Belongs to the tetrahydrofolate dehydrogenase/cyclohydrolase family.</text>
</comment>
<name>FOLD_SHESW</name>
<sequence length="284" mass="30463">MTAQIIDGKAIAQSIRTKLSEKVTARKEAGQRVPGLAVILVGADPASQVYVGSKRKACEEVGFISRSYDLETNCSEDELLSLIDSLNDDPTIDGILVQLPLPAHIEDSKVIERIRPDKDVDGFHPYNVGRLAQRIPVLRSCTPMGIMTLIKSTGVDTYGLDAVVVGASNIVGRPMTLELLLAGCTTTTCHRFTKNLEQKIRQADLVVVAVGKPGFIPGEWIKPGAIVIDVGINRLDNGTLVGDVQYEAAAQNASFITPVPGGVGPMTIASLLENTLYAAEQYHD</sequence>
<proteinExistence type="inferred from homology"/>